<reference key="1">
    <citation type="journal article" date="2009" name="PLoS Genet.">
        <title>Organised genome dynamics in the Escherichia coli species results in highly diverse adaptive paths.</title>
        <authorList>
            <person name="Touchon M."/>
            <person name="Hoede C."/>
            <person name="Tenaillon O."/>
            <person name="Barbe V."/>
            <person name="Baeriswyl S."/>
            <person name="Bidet P."/>
            <person name="Bingen E."/>
            <person name="Bonacorsi S."/>
            <person name="Bouchier C."/>
            <person name="Bouvet O."/>
            <person name="Calteau A."/>
            <person name="Chiapello H."/>
            <person name="Clermont O."/>
            <person name="Cruveiller S."/>
            <person name="Danchin A."/>
            <person name="Diard M."/>
            <person name="Dossat C."/>
            <person name="Karoui M.E."/>
            <person name="Frapy E."/>
            <person name="Garry L."/>
            <person name="Ghigo J.M."/>
            <person name="Gilles A.M."/>
            <person name="Johnson J."/>
            <person name="Le Bouguenec C."/>
            <person name="Lescat M."/>
            <person name="Mangenot S."/>
            <person name="Martinez-Jehanne V."/>
            <person name="Matic I."/>
            <person name="Nassif X."/>
            <person name="Oztas S."/>
            <person name="Petit M.A."/>
            <person name="Pichon C."/>
            <person name="Rouy Z."/>
            <person name="Ruf C.S."/>
            <person name="Schneider D."/>
            <person name="Tourret J."/>
            <person name="Vacherie B."/>
            <person name="Vallenet D."/>
            <person name="Medigue C."/>
            <person name="Rocha E.P.C."/>
            <person name="Denamur E."/>
        </authorList>
    </citation>
    <scope>NUCLEOTIDE SEQUENCE [LARGE SCALE GENOMIC DNA]</scope>
    <source>
        <strain>ATCC 35469 / DSM 13698 / BCRC 15582 / CCUG 18766 / IAM 14443 / JCM 21226 / LMG 7866 / NBRC 102419 / NCTC 12128 / CDC 0568-73</strain>
    </source>
</reference>
<proteinExistence type="inferred from homology"/>
<comment type="function">
    <text evidence="1">Catalyzes the hydrolysis of nucleoside triphosphates, with a preference for pyrimidine deoxynucleoside triphosphates (dUTP, dTTP and dCTP).</text>
</comment>
<comment type="catalytic activity">
    <reaction evidence="1">
        <text>a ribonucleoside 5'-triphosphate + H2O = a ribonucleoside 5'-phosphate + diphosphate + H(+)</text>
        <dbReference type="Rhea" id="RHEA:23996"/>
        <dbReference type="ChEBI" id="CHEBI:15377"/>
        <dbReference type="ChEBI" id="CHEBI:15378"/>
        <dbReference type="ChEBI" id="CHEBI:33019"/>
        <dbReference type="ChEBI" id="CHEBI:58043"/>
        <dbReference type="ChEBI" id="CHEBI:61557"/>
        <dbReference type="EC" id="3.6.1.9"/>
    </reaction>
</comment>
<comment type="catalytic activity">
    <reaction evidence="1">
        <text>a 2'-deoxyribonucleoside 5'-triphosphate + H2O = a 2'-deoxyribonucleoside 5'-phosphate + diphosphate + H(+)</text>
        <dbReference type="Rhea" id="RHEA:44644"/>
        <dbReference type="ChEBI" id="CHEBI:15377"/>
        <dbReference type="ChEBI" id="CHEBI:15378"/>
        <dbReference type="ChEBI" id="CHEBI:33019"/>
        <dbReference type="ChEBI" id="CHEBI:61560"/>
        <dbReference type="ChEBI" id="CHEBI:65317"/>
        <dbReference type="EC" id="3.6.1.9"/>
    </reaction>
</comment>
<comment type="catalytic activity">
    <reaction evidence="1">
        <text>dUTP + H2O = dUMP + diphosphate + H(+)</text>
        <dbReference type="Rhea" id="RHEA:10248"/>
        <dbReference type="ChEBI" id="CHEBI:15377"/>
        <dbReference type="ChEBI" id="CHEBI:15378"/>
        <dbReference type="ChEBI" id="CHEBI:33019"/>
        <dbReference type="ChEBI" id="CHEBI:61555"/>
        <dbReference type="ChEBI" id="CHEBI:246422"/>
        <dbReference type="EC" id="3.6.1.9"/>
    </reaction>
</comment>
<comment type="catalytic activity">
    <reaction evidence="1">
        <text>dUTP + H2O = dUMP + diphosphate + H(+)</text>
        <dbReference type="Rhea" id="RHEA:10248"/>
        <dbReference type="ChEBI" id="CHEBI:15377"/>
        <dbReference type="ChEBI" id="CHEBI:15378"/>
        <dbReference type="ChEBI" id="CHEBI:33019"/>
        <dbReference type="ChEBI" id="CHEBI:61555"/>
        <dbReference type="ChEBI" id="CHEBI:246422"/>
        <dbReference type="EC" id="3.6.1.23"/>
    </reaction>
</comment>
<comment type="catalytic activity">
    <reaction evidence="1">
        <text>dTTP + H2O = dTMP + diphosphate + H(+)</text>
        <dbReference type="Rhea" id="RHEA:28534"/>
        <dbReference type="ChEBI" id="CHEBI:15377"/>
        <dbReference type="ChEBI" id="CHEBI:15378"/>
        <dbReference type="ChEBI" id="CHEBI:33019"/>
        <dbReference type="ChEBI" id="CHEBI:37568"/>
        <dbReference type="ChEBI" id="CHEBI:63528"/>
        <dbReference type="EC" id="3.6.1.9"/>
    </reaction>
</comment>
<comment type="catalytic activity">
    <reaction evidence="1">
        <text>dCTP + H2O = dCMP + diphosphate + H(+)</text>
        <dbReference type="Rhea" id="RHEA:22636"/>
        <dbReference type="ChEBI" id="CHEBI:15377"/>
        <dbReference type="ChEBI" id="CHEBI:15378"/>
        <dbReference type="ChEBI" id="CHEBI:33019"/>
        <dbReference type="ChEBI" id="CHEBI:57566"/>
        <dbReference type="ChEBI" id="CHEBI:61481"/>
        <dbReference type="EC" id="3.6.1.9"/>
    </reaction>
</comment>
<comment type="catalytic activity">
    <reaction evidence="1">
        <text>dCTP + H2O = dCMP + diphosphate + H(+)</text>
        <dbReference type="Rhea" id="RHEA:22636"/>
        <dbReference type="ChEBI" id="CHEBI:15377"/>
        <dbReference type="ChEBI" id="CHEBI:15378"/>
        <dbReference type="ChEBI" id="CHEBI:33019"/>
        <dbReference type="ChEBI" id="CHEBI:57566"/>
        <dbReference type="ChEBI" id="CHEBI:61481"/>
        <dbReference type="EC" id="3.6.1.12"/>
    </reaction>
</comment>
<comment type="cofactor">
    <cofactor evidence="1">
        <name>Mg(2+)</name>
        <dbReference type="ChEBI" id="CHEBI:18420"/>
    </cofactor>
</comment>
<comment type="subunit">
    <text evidence="1">Monomer.</text>
</comment>
<comment type="similarity">
    <text evidence="1">Belongs to the Nudix hydrolase family. NudI subfamily.</text>
</comment>
<feature type="chain" id="PRO_1000188484" description="Nucleoside triphosphatase NudI">
    <location>
        <begin position="1"/>
        <end position="141"/>
    </location>
</feature>
<feature type="domain" description="Nudix hydrolase" evidence="1">
    <location>
        <begin position="1"/>
        <end position="141"/>
    </location>
</feature>
<feature type="short sequence motif" description="Nudix box">
    <location>
        <begin position="38"/>
        <end position="59"/>
    </location>
</feature>
<evidence type="ECO:0000255" key="1">
    <source>
        <dbReference type="HAMAP-Rule" id="MF_01846"/>
    </source>
</evidence>
<dbReference type="EC" id="3.6.1.9" evidence="1"/>
<dbReference type="EC" id="3.6.1.12" evidence="1"/>
<dbReference type="EC" id="3.6.1.-" evidence="1"/>
<dbReference type="EC" id="3.6.1.23" evidence="1"/>
<dbReference type="EMBL" id="CU928158">
    <property type="protein sequence ID" value="CAQ88453.1"/>
    <property type="molecule type" value="Genomic_DNA"/>
</dbReference>
<dbReference type="RefSeq" id="WP_001249880.1">
    <property type="nucleotide sequence ID" value="NC_011740.1"/>
</dbReference>
<dbReference type="SMR" id="B7LM80"/>
<dbReference type="GeneID" id="75058023"/>
<dbReference type="KEGG" id="efe:EFER_0918"/>
<dbReference type="HOGENOM" id="CLU_037162_31_0_6"/>
<dbReference type="OrthoDB" id="289720at2"/>
<dbReference type="Proteomes" id="UP000000745">
    <property type="component" value="Chromosome"/>
</dbReference>
<dbReference type="GO" id="GO:0047840">
    <property type="term" value="F:dCTP diphosphatase activity"/>
    <property type="evidence" value="ECO:0007669"/>
    <property type="project" value="UniProtKB-EC"/>
</dbReference>
<dbReference type="GO" id="GO:0036218">
    <property type="term" value="F:dTTP diphosphatase activity"/>
    <property type="evidence" value="ECO:0007669"/>
    <property type="project" value="RHEA"/>
</dbReference>
<dbReference type="GO" id="GO:0004170">
    <property type="term" value="F:dUTP diphosphatase activity"/>
    <property type="evidence" value="ECO:0007669"/>
    <property type="project" value="UniProtKB-EC"/>
</dbReference>
<dbReference type="GO" id="GO:0000287">
    <property type="term" value="F:magnesium ion binding"/>
    <property type="evidence" value="ECO:0007669"/>
    <property type="project" value="UniProtKB-UniRule"/>
</dbReference>
<dbReference type="Gene3D" id="3.90.79.10">
    <property type="entry name" value="Nucleoside Triphosphate Pyrophosphohydrolase"/>
    <property type="match status" value="1"/>
</dbReference>
<dbReference type="HAMAP" id="MF_01846">
    <property type="entry name" value="Nudix_NudI"/>
    <property type="match status" value="1"/>
</dbReference>
<dbReference type="InterPro" id="IPR023781">
    <property type="entry name" value="Nucleoside_triphosphatase_NudI"/>
</dbReference>
<dbReference type="InterPro" id="IPR020476">
    <property type="entry name" value="Nudix_hydrolase"/>
</dbReference>
<dbReference type="InterPro" id="IPR015797">
    <property type="entry name" value="NUDIX_hydrolase-like_dom_sf"/>
</dbReference>
<dbReference type="InterPro" id="IPR020084">
    <property type="entry name" value="NUDIX_hydrolase_CS"/>
</dbReference>
<dbReference type="InterPro" id="IPR000086">
    <property type="entry name" value="NUDIX_hydrolase_dom"/>
</dbReference>
<dbReference type="NCBIfam" id="NF012016">
    <property type="entry name" value="PRK15472.1"/>
    <property type="match status" value="1"/>
</dbReference>
<dbReference type="PANTHER" id="PTHR43046">
    <property type="entry name" value="GDP-MANNOSE MANNOSYL HYDROLASE"/>
    <property type="match status" value="1"/>
</dbReference>
<dbReference type="PANTHER" id="PTHR43046:SF14">
    <property type="entry name" value="MUTT_NUDIX FAMILY PROTEIN"/>
    <property type="match status" value="1"/>
</dbReference>
<dbReference type="Pfam" id="PF00293">
    <property type="entry name" value="NUDIX"/>
    <property type="match status" value="1"/>
</dbReference>
<dbReference type="PRINTS" id="PR00502">
    <property type="entry name" value="NUDIXFAMILY"/>
</dbReference>
<dbReference type="SUPFAM" id="SSF55811">
    <property type="entry name" value="Nudix"/>
    <property type="match status" value="1"/>
</dbReference>
<dbReference type="PROSITE" id="PS51462">
    <property type="entry name" value="NUDIX"/>
    <property type="match status" value="1"/>
</dbReference>
<dbReference type="PROSITE" id="PS00893">
    <property type="entry name" value="NUDIX_BOX"/>
    <property type="match status" value="1"/>
</dbReference>
<keyword id="KW-0378">Hydrolase</keyword>
<keyword id="KW-0460">Magnesium</keyword>
<protein>
    <recommendedName>
        <fullName evidence="1">Nucleoside triphosphatase NudI</fullName>
        <ecNumber evidence="1">3.6.1.9</ecNumber>
    </recommendedName>
    <alternativeName>
        <fullName evidence="1">Nucleotide diphosphatase NudI</fullName>
    </alternativeName>
    <alternativeName>
        <fullName evidence="1">Pyrimidine deoxynucleoside triphosphate diphosphatase</fullName>
    </alternativeName>
    <alternativeName>
        <fullName evidence="1">dCTP diphosphatase</fullName>
        <ecNumber evidence="1">3.6.1.12</ecNumber>
    </alternativeName>
    <alternativeName>
        <fullName evidence="1">dTTP diphosphatase</fullName>
        <ecNumber evidence="1">3.6.1.-</ecNumber>
    </alternativeName>
    <alternativeName>
        <fullName evidence="1">dUTP diphosphatase</fullName>
        <ecNumber evidence="1">3.6.1.23</ecNumber>
    </alternativeName>
</protein>
<sequence length="141" mass="16194">MRQRTIVCPLIQNDGAYLLCKMADDRGVFPGQWALSGGGVEPGERIEDALRREIREELGDKLILQKITPWTFSDDVRMKTYADGTKEEIYMIYLIFDCVSANREITINEEFQDFAWVKPQDLAQYDLNVATRKTLSLKGLL</sequence>
<organism>
    <name type="scientific">Escherichia fergusonii (strain ATCC 35469 / DSM 13698 / CCUG 18766 / IAM 14443 / JCM 21226 / LMG 7866 / NBRC 102419 / NCTC 12128 / CDC 0568-73)</name>
    <dbReference type="NCBI Taxonomy" id="585054"/>
    <lineage>
        <taxon>Bacteria</taxon>
        <taxon>Pseudomonadati</taxon>
        <taxon>Pseudomonadota</taxon>
        <taxon>Gammaproteobacteria</taxon>
        <taxon>Enterobacterales</taxon>
        <taxon>Enterobacteriaceae</taxon>
        <taxon>Escherichia</taxon>
    </lineage>
</organism>
<gene>
    <name evidence="1" type="primary">nudI</name>
    <name type="ordered locus">EFER_0918</name>
</gene>
<accession>B7LM80</accession>
<name>NUDI_ESCF3</name>